<accession>Q92P76</accession>
<gene>
    <name evidence="1" type="primary">znuC</name>
    <name type="ordered locus">R01914</name>
    <name type="ORF">SMc04244</name>
</gene>
<evidence type="ECO:0000255" key="1">
    <source>
        <dbReference type="HAMAP-Rule" id="MF_01725"/>
    </source>
</evidence>
<evidence type="ECO:0000305" key="2"/>
<comment type="function">
    <text evidence="1">Part of the ABC transporter complex ZnuABC involved in zinc import. Responsible for energy coupling to the transport system.</text>
</comment>
<comment type="catalytic activity">
    <reaction evidence="1">
        <text>Zn(2+)(out) + ATP(in) + H2O(in) = Zn(2+)(in) + ADP(in) + phosphate(in) + H(+)(in)</text>
        <dbReference type="Rhea" id="RHEA:29795"/>
        <dbReference type="ChEBI" id="CHEBI:15377"/>
        <dbReference type="ChEBI" id="CHEBI:15378"/>
        <dbReference type="ChEBI" id="CHEBI:29105"/>
        <dbReference type="ChEBI" id="CHEBI:30616"/>
        <dbReference type="ChEBI" id="CHEBI:43474"/>
        <dbReference type="ChEBI" id="CHEBI:456216"/>
        <dbReference type="EC" id="7.2.2.20"/>
    </reaction>
</comment>
<comment type="subunit">
    <text evidence="1">The complex is composed of two ATP-binding proteins (ZnuC), two transmembrane proteins (ZnuB) and a solute-binding protein (ZnuA).</text>
</comment>
<comment type="subcellular location">
    <subcellularLocation>
        <location evidence="1">Cell inner membrane</location>
        <topology evidence="1">Peripheral membrane protein</topology>
    </subcellularLocation>
</comment>
<comment type="similarity">
    <text evidence="1">Belongs to the ABC transporter superfamily. Zinc importer (TC 3.A.1.15.5) family.</text>
</comment>
<comment type="sequence caution" evidence="2">
    <conflict type="erroneous initiation">
        <sequence resource="EMBL-CDS" id="CAC46493"/>
    </conflict>
</comment>
<keyword id="KW-0067">ATP-binding</keyword>
<keyword id="KW-0997">Cell inner membrane</keyword>
<keyword id="KW-1003">Cell membrane</keyword>
<keyword id="KW-0406">Ion transport</keyword>
<keyword id="KW-0472">Membrane</keyword>
<keyword id="KW-0547">Nucleotide-binding</keyword>
<keyword id="KW-1185">Reference proteome</keyword>
<keyword id="KW-1278">Translocase</keyword>
<keyword id="KW-0813">Transport</keyword>
<keyword id="KW-0862">Zinc</keyword>
<keyword id="KW-0864">Zinc transport</keyword>
<proteinExistence type="inferred from homology"/>
<dbReference type="EC" id="7.2.2.20" evidence="1"/>
<dbReference type="EMBL" id="AL591688">
    <property type="protein sequence ID" value="CAC46493.1"/>
    <property type="status" value="ALT_INIT"/>
    <property type="molecule type" value="Genomic_DNA"/>
</dbReference>
<dbReference type="RefSeq" id="NP_386020.1">
    <property type="nucleotide sequence ID" value="NC_003047.1"/>
</dbReference>
<dbReference type="RefSeq" id="WP_013844580.1">
    <property type="nucleotide sequence ID" value="NC_003047.1"/>
</dbReference>
<dbReference type="SMR" id="Q92P76"/>
<dbReference type="EnsemblBacteria" id="CAC46493">
    <property type="protein sequence ID" value="CAC46493"/>
    <property type="gene ID" value="SMc04244"/>
</dbReference>
<dbReference type="KEGG" id="sme:SMc04244"/>
<dbReference type="PATRIC" id="fig|266834.11.peg.3358"/>
<dbReference type="eggNOG" id="COG1121">
    <property type="taxonomic scope" value="Bacteria"/>
</dbReference>
<dbReference type="HOGENOM" id="CLU_000604_1_11_5"/>
<dbReference type="OrthoDB" id="9780942at2"/>
<dbReference type="Proteomes" id="UP000001976">
    <property type="component" value="Chromosome"/>
</dbReference>
<dbReference type="GO" id="GO:0005886">
    <property type="term" value="C:plasma membrane"/>
    <property type="evidence" value="ECO:0007669"/>
    <property type="project" value="UniProtKB-SubCell"/>
</dbReference>
<dbReference type="GO" id="GO:0015633">
    <property type="term" value="F:ABC-type zinc transporter activity"/>
    <property type="evidence" value="ECO:0007669"/>
    <property type="project" value="UniProtKB-EC"/>
</dbReference>
<dbReference type="GO" id="GO:0005524">
    <property type="term" value="F:ATP binding"/>
    <property type="evidence" value="ECO:0007669"/>
    <property type="project" value="UniProtKB-KW"/>
</dbReference>
<dbReference type="GO" id="GO:0016887">
    <property type="term" value="F:ATP hydrolysis activity"/>
    <property type="evidence" value="ECO:0007669"/>
    <property type="project" value="InterPro"/>
</dbReference>
<dbReference type="GO" id="GO:0010043">
    <property type="term" value="P:response to zinc ion"/>
    <property type="evidence" value="ECO:0007669"/>
    <property type="project" value="TreeGrafter"/>
</dbReference>
<dbReference type="Gene3D" id="3.40.50.300">
    <property type="entry name" value="P-loop containing nucleotide triphosphate hydrolases"/>
    <property type="match status" value="1"/>
</dbReference>
<dbReference type="InterPro" id="IPR003593">
    <property type="entry name" value="AAA+_ATPase"/>
</dbReference>
<dbReference type="InterPro" id="IPR003439">
    <property type="entry name" value="ABC_transporter-like_ATP-bd"/>
</dbReference>
<dbReference type="InterPro" id="IPR017871">
    <property type="entry name" value="ABC_transporter-like_CS"/>
</dbReference>
<dbReference type="InterPro" id="IPR050153">
    <property type="entry name" value="Metal_Ion_Import_ABC"/>
</dbReference>
<dbReference type="InterPro" id="IPR027417">
    <property type="entry name" value="P-loop_NTPase"/>
</dbReference>
<dbReference type="PANTHER" id="PTHR42734">
    <property type="entry name" value="METAL TRANSPORT SYSTEM ATP-BINDING PROTEIN TM_0124-RELATED"/>
    <property type="match status" value="1"/>
</dbReference>
<dbReference type="PANTHER" id="PTHR42734:SF9">
    <property type="entry name" value="ZINC IMPORT ATP-BINDING PROTEIN ZNUC"/>
    <property type="match status" value="1"/>
</dbReference>
<dbReference type="Pfam" id="PF00005">
    <property type="entry name" value="ABC_tran"/>
    <property type="match status" value="1"/>
</dbReference>
<dbReference type="SMART" id="SM00382">
    <property type="entry name" value="AAA"/>
    <property type="match status" value="1"/>
</dbReference>
<dbReference type="SUPFAM" id="SSF52540">
    <property type="entry name" value="P-loop containing nucleoside triphosphate hydrolases"/>
    <property type="match status" value="1"/>
</dbReference>
<dbReference type="PROSITE" id="PS00211">
    <property type="entry name" value="ABC_TRANSPORTER_1"/>
    <property type="match status" value="1"/>
</dbReference>
<dbReference type="PROSITE" id="PS50893">
    <property type="entry name" value="ABC_TRANSPORTER_2"/>
    <property type="match status" value="1"/>
</dbReference>
<dbReference type="PROSITE" id="PS51298">
    <property type="entry name" value="ZNUC"/>
    <property type="match status" value="1"/>
</dbReference>
<name>ZNUC_RHIME</name>
<reference key="1">
    <citation type="journal article" date="2001" name="Proc. Natl. Acad. Sci. U.S.A.">
        <title>Analysis of the chromosome sequence of the legume symbiont Sinorhizobium meliloti strain 1021.</title>
        <authorList>
            <person name="Capela D."/>
            <person name="Barloy-Hubler F."/>
            <person name="Gouzy J."/>
            <person name="Bothe G."/>
            <person name="Ampe F."/>
            <person name="Batut J."/>
            <person name="Boistard P."/>
            <person name="Becker A."/>
            <person name="Boutry M."/>
            <person name="Cadieu E."/>
            <person name="Dreano S."/>
            <person name="Gloux S."/>
            <person name="Godrie T."/>
            <person name="Goffeau A."/>
            <person name="Kahn D."/>
            <person name="Kiss E."/>
            <person name="Lelaure V."/>
            <person name="Masuy D."/>
            <person name="Pohl T."/>
            <person name="Portetelle D."/>
            <person name="Puehler A."/>
            <person name="Purnelle B."/>
            <person name="Ramsperger U."/>
            <person name="Renard C."/>
            <person name="Thebault P."/>
            <person name="Vandenbol M."/>
            <person name="Weidner S."/>
            <person name="Galibert F."/>
        </authorList>
    </citation>
    <scope>NUCLEOTIDE SEQUENCE [LARGE SCALE GENOMIC DNA]</scope>
    <source>
        <strain>1021</strain>
    </source>
</reference>
<reference key="2">
    <citation type="journal article" date="2001" name="Science">
        <title>The composite genome of the legume symbiont Sinorhizobium meliloti.</title>
        <authorList>
            <person name="Galibert F."/>
            <person name="Finan T.M."/>
            <person name="Long S.R."/>
            <person name="Puehler A."/>
            <person name="Abola P."/>
            <person name="Ampe F."/>
            <person name="Barloy-Hubler F."/>
            <person name="Barnett M.J."/>
            <person name="Becker A."/>
            <person name="Boistard P."/>
            <person name="Bothe G."/>
            <person name="Boutry M."/>
            <person name="Bowser L."/>
            <person name="Buhrmester J."/>
            <person name="Cadieu E."/>
            <person name="Capela D."/>
            <person name="Chain P."/>
            <person name="Cowie A."/>
            <person name="Davis R.W."/>
            <person name="Dreano S."/>
            <person name="Federspiel N.A."/>
            <person name="Fisher R.F."/>
            <person name="Gloux S."/>
            <person name="Godrie T."/>
            <person name="Goffeau A."/>
            <person name="Golding B."/>
            <person name="Gouzy J."/>
            <person name="Gurjal M."/>
            <person name="Hernandez-Lucas I."/>
            <person name="Hong A."/>
            <person name="Huizar L."/>
            <person name="Hyman R.W."/>
            <person name="Jones T."/>
            <person name="Kahn D."/>
            <person name="Kahn M.L."/>
            <person name="Kalman S."/>
            <person name="Keating D.H."/>
            <person name="Kiss E."/>
            <person name="Komp C."/>
            <person name="Lelaure V."/>
            <person name="Masuy D."/>
            <person name="Palm C."/>
            <person name="Peck M.C."/>
            <person name="Pohl T.M."/>
            <person name="Portetelle D."/>
            <person name="Purnelle B."/>
            <person name="Ramsperger U."/>
            <person name="Surzycki R."/>
            <person name="Thebault P."/>
            <person name="Vandenbol M."/>
            <person name="Vorhoelter F.J."/>
            <person name="Weidner S."/>
            <person name="Wells D.H."/>
            <person name="Wong K."/>
            <person name="Yeh K.-C."/>
            <person name="Batut J."/>
        </authorList>
    </citation>
    <scope>NUCLEOTIDE SEQUENCE [LARGE SCALE GENOMIC DNA]</scope>
    <source>
        <strain>1021</strain>
    </source>
</reference>
<feature type="chain" id="PRO_0000281537" description="Zinc import ATP-binding protein ZnuC">
    <location>
        <begin position="1"/>
        <end position="302"/>
    </location>
</feature>
<feature type="domain" description="ABC transporter" evidence="1">
    <location>
        <begin position="13"/>
        <end position="228"/>
    </location>
</feature>
<feature type="binding site" evidence="1">
    <location>
        <begin position="45"/>
        <end position="52"/>
    </location>
    <ligand>
        <name>ATP</name>
        <dbReference type="ChEBI" id="CHEBI:30616"/>
    </ligand>
</feature>
<organism>
    <name type="scientific">Rhizobium meliloti (strain 1021)</name>
    <name type="common">Ensifer meliloti</name>
    <name type="synonym">Sinorhizobium meliloti</name>
    <dbReference type="NCBI Taxonomy" id="266834"/>
    <lineage>
        <taxon>Bacteria</taxon>
        <taxon>Pseudomonadati</taxon>
        <taxon>Pseudomonadota</taxon>
        <taxon>Alphaproteobacteria</taxon>
        <taxon>Hyphomicrobiales</taxon>
        <taxon>Rhizobiaceae</taxon>
        <taxon>Sinorhizobium/Ensifer group</taxon>
        <taxon>Sinorhizobium</taxon>
    </lineage>
</organism>
<sequence length="302" mass="32851">MLNFRSPETMPLVSLANAGVRRNGRWLVRGVDFSISRGEIVTLIGPNGSGKSTTAKTAIGVLKPDEGHVERLAGLKVGYVPQKLAVDWTLPLTVERLMTLTGPLKGREIEESLAATGMLHMAKAEVQHLSGGEFQRALLARAIARKPDLLVLDEPVQGVDFSGEIALYELIKQIRNRTGCGILLISHDLHIVMAETDTVVCLNGHVCCRGTPQVVSQSPEYLKLFGRRAAGALAVYSHHHDHTHLPDGRVLHADGSITESCFPGDGHHHHEEADNIHDHDPDCGCGHHARLQGYDGTEKRDA</sequence>
<protein>
    <recommendedName>
        <fullName evidence="1">Zinc import ATP-binding protein ZnuC</fullName>
        <ecNumber evidence="1">7.2.2.20</ecNumber>
    </recommendedName>
</protein>